<accession>P16148</accession>
<sequence length="184" mass="20567">MNLDDLFEQKGEVAKSVLEELEKVMGEYGYNIEHILMVDIIPDDSVRRAMNEINAAQRMQLASLYKGEAEKILQVKRAEAEAEAKYLGGVGVARQRQAITDGLRENILNFSHKVEGTSAKEVMDLIMITQYFDTIKDLGNSSKNTTVFIPHGPGHVRDIGEQIRNGLMESARAGINIERFCISP</sequence>
<proteinExistence type="evidence at transcript level"/>
<reference key="1">
    <citation type="journal article" date="1990" name="Plant Mol. Biol.">
        <title>Tissue-specific expression of a cDNA clone from cell suspension cultures of Lupinus polyphyllus.</title>
        <authorList>
            <person name="Perrey R."/>
            <person name="Schneider M."/>
            <person name="Wink M."/>
        </authorList>
    </citation>
    <scope>NUCLEOTIDE SEQUENCE [MRNA]</scope>
</reference>
<gene>
    <name type="primary">PPLZ12</name>
</gene>
<protein>
    <recommendedName>
        <fullName>Protein PPLZ12</fullName>
    </recommendedName>
</protein>
<feature type="chain" id="PRO_0000058465" description="Protein PPLZ12">
    <location>
        <begin position="1"/>
        <end position="184"/>
    </location>
</feature>
<dbReference type="EMBL" id="X51768">
    <property type="protein sequence ID" value="CAA36070.1"/>
    <property type="molecule type" value="mRNA"/>
</dbReference>
<dbReference type="PIR" id="S14688">
    <property type="entry name" value="S14688"/>
</dbReference>
<dbReference type="SMR" id="P16148"/>
<dbReference type="CDD" id="cd03407">
    <property type="entry name" value="SPFH_like_u4"/>
    <property type="match status" value="1"/>
</dbReference>
<dbReference type="Gene3D" id="3.30.479.30">
    <property type="entry name" value="Band 7 domain"/>
    <property type="match status" value="1"/>
</dbReference>
<dbReference type="InterPro" id="IPR050710">
    <property type="entry name" value="Band7/mec-2_domain"/>
</dbReference>
<dbReference type="InterPro" id="IPR001107">
    <property type="entry name" value="Band_7"/>
</dbReference>
<dbReference type="InterPro" id="IPR036013">
    <property type="entry name" value="Band_7/SPFH_dom_sf"/>
</dbReference>
<dbReference type="PANTHER" id="PTHR43327:SF11">
    <property type="entry name" value="HYPERSENSITIVE-INDUCED RESPONSE PROTEIN 4"/>
    <property type="match status" value="1"/>
</dbReference>
<dbReference type="PANTHER" id="PTHR43327">
    <property type="entry name" value="STOMATIN-LIKE PROTEIN 2, MITOCHONDRIAL"/>
    <property type="match status" value="1"/>
</dbReference>
<dbReference type="Pfam" id="PF01145">
    <property type="entry name" value="Band_7"/>
    <property type="match status" value="1"/>
</dbReference>
<dbReference type="SUPFAM" id="SSF117892">
    <property type="entry name" value="Band 7/SPFH domain"/>
    <property type="match status" value="1"/>
</dbReference>
<organism>
    <name type="scientific">Lupinus polyphyllus</name>
    <name type="common">Large-leaved lupine</name>
    <dbReference type="NCBI Taxonomy" id="3874"/>
    <lineage>
        <taxon>Eukaryota</taxon>
        <taxon>Viridiplantae</taxon>
        <taxon>Streptophyta</taxon>
        <taxon>Embryophyta</taxon>
        <taxon>Tracheophyta</taxon>
        <taxon>Spermatophyta</taxon>
        <taxon>Magnoliopsida</taxon>
        <taxon>eudicotyledons</taxon>
        <taxon>Gunneridae</taxon>
        <taxon>Pentapetalae</taxon>
        <taxon>rosids</taxon>
        <taxon>fabids</taxon>
        <taxon>Fabales</taxon>
        <taxon>Fabaceae</taxon>
        <taxon>Papilionoideae</taxon>
        <taxon>50 kb inversion clade</taxon>
        <taxon>genistoids sensu lato</taxon>
        <taxon>core genistoids</taxon>
        <taxon>Genisteae</taxon>
        <taxon>Lupinus</taxon>
    </lineage>
</organism>
<name>PLZ12_LUPPO</name>